<feature type="chain" id="PRO_0000378011" description="Uncharacterized protein 145L">
    <location>
        <begin position="1"/>
        <end position="155"/>
    </location>
</feature>
<name>VF145_IIV6</name>
<dbReference type="EMBL" id="AF303741">
    <property type="protein sequence ID" value="AAB94461.1"/>
    <property type="molecule type" value="Genomic_DNA"/>
</dbReference>
<dbReference type="PIR" id="T03087">
    <property type="entry name" value="T03087"/>
</dbReference>
<dbReference type="RefSeq" id="NP_149608.1">
    <property type="nucleotide sequence ID" value="NC_003038.1"/>
</dbReference>
<dbReference type="SMR" id="O55750"/>
<dbReference type="KEGG" id="vg:1733159"/>
<dbReference type="OrthoDB" id="39481at10239"/>
<dbReference type="Proteomes" id="UP000001359">
    <property type="component" value="Genome"/>
</dbReference>
<proteinExistence type="inferred from homology"/>
<organismHost>
    <name type="scientific">Acheta domesticus</name>
    <name type="common">House cricket</name>
    <dbReference type="NCBI Taxonomy" id="6997"/>
</organismHost>
<organismHost>
    <name type="scientific">Chilo suppressalis</name>
    <name type="common">Asiatic rice borer moth</name>
    <dbReference type="NCBI Taxonomy" id="168631"/>
</organismHost>
<organismHost>
    <name type="scientific">Gryllus bimaculatus</name>
    <name type="common">Two-spotted cricket</name>
    <dbReference type="NCBI Taxonomy" id="6999"/>
</organismHost>
<organismHost>
    <name type="scientific">Gryllus campestris</name>
    <dbReference type="NCBI Taxonomy" id="58607"/>
</organismHost>
<organismHost>
    <name type="scientific">Spodoptera frugiperda</name>
    <name type="common">Fall armyworm</name>
    <dbReference type="NCBI Taxonomy" id="7108"/>
</organismHost>
<accession>O55750</accession>
<gene>
    <name type="ORF">IIV6-145L</name>
</gene>
<reference key="1">
    <citation type="journal article" date="2001" name="Virology">
        <title>Analysis of the first complete DNA sequence of an invertebrate iridovirus: coding strategy of the genome of Chilo iridescent virus.</title>
        <authorList>
            <person name="Jakob N.J."/>
            <person name="Mueller K."/>
            <person name="Bahr U."/>
            <person name="Darai G."/>
        </authorList>
    </citation>
    <scope>NUCLEOTIDE SEQUENCE [LARGE SCALE GENOMIC DNA]</scope>
</reference>
<reference key="2">
    <citation type="journal article" date="2007" name="Virol. J.">
        <title>Comparative genomic analysis of the family Iridoviridae: re-annotating and defining the core set of iridovirus genes.</title>
        <authorList>
            <person name="Eaton H.E."/>
            <person name="Metcalf J."/>
            <person name="Penny E."/>
            <person name="Tcherepanov V."/>
            <person name="Upton C."/>
            <person name="Brunetti C.R."/>
        </authorList>
    </citation>
    <scope>GENOME REANNOTATION</scope>
</reference>
<keyword id="KW-1185">Reference proteome</keyword>
<protein>
    <recommendedName>
        <fullName>Uncharacterized protein 145L</fullName>
    </recommendedName>
</protein>
<evidence type="ECO:0000305" key="1"/>
<organism>
    <name type="scientific">Invertebrate iridescent virus 6</name>
    <name type="common">IIV-6</name>
    <name type="synonym">Chilo iridescent virus</name>
    <dbReference type="NCBI Taxonomy" id="176652"/>
    <lineage>
        <taxon>Viruses</taxon>
        <taxon>Varidnaviria</taxon>
        <taxon>Bamfordvirae</taxon>
        <taxon>Nucleocytoviricota</taxon>
        <taxon>Megaviricetes</taxon>
        <taxon>Pimascovirales</taxon>
        <taxon>Iridoviridae</taxon>
        <taxon>Betairidovirinae</taxon>
        <taxon>Iridovirus</taxon>
    </lineage>
</organism>
<sequence>MLRIKYPKFLNCIKYIPKGSDICIIEAIESLAYGNSESKYLSTMLEQNGNDYKKLINIIIEKYDLQVIVKNNKYVTNYEDDDTKEGKKKKAIKDIMVENYLIRMKVEKGLSISQIKKILFKINLRLFLKMLPLKNILIEDGEIISILDPIIDDLD</sequence>
<comment type="similarity">
    <text evidence="1">Belongs to the IIV-6 145L family.</text>
</comment>